<proteinExistence type="predicted"/>
<comment type="similarity">
    <text evidence="1">To M.jannaschii MJ0310 and MJ1340.</text>
</comment>
<name>Y714_METJA</name>
<reference key="1">
    <citation type="journal article" date="1996" name="Science">
        <title>Complete genome sequence of the methanogenic archaeon, Methanococcus jannaschii.</title>
        <authorList>
            <person name="Bult C.J."/>
            <person name="White O."/>
            <person name="Olsen G.J."/>
            <person name="Zhou L."/>
            <person name="Fleischmann R.D."/>
            <person name="Sutton G.G."/>
            <person name="Blake J.A."/>
            <person name="FitzGerald L.M."/>
            <person name="Clayton R.A."/>
            <person name="Gocayne J.D."/>
            <person name="Kerlavage A.R."/>
            <person name="Dougherty B.A."/>
            <person name="Tomb J.-F."/>
            <person name="Adams M.D."/>
            <person name="Reich C.I."/>
            <person name="Overbeek R."/>
            <person name="Kirkness E.F."/>
            <person name="Weinstock K.G."/>
            <person name="Merrick J.M."/>
            <person name="Glodek A."/>
            <person name="Scott J.L."/>
            <person name="Geoghagen N.S.M."/>
            <person name="Weidman J.F."/>
            <person name="Fuhrmann J.L."/>
            <person name="Nguyen D."/>
            <person name="Utterback T.R."/>
            <person name="Kelley J.M."/>
            <person name="Peterson J.D."/>
            <person name="Sadow P.W."/>
            <person name="Hanna M.C."/>
            <person name="Cotton M.D."/>
            <person name="Roberts K.M."/>
            <person name="Hurst M.A."/>
            <person name="Kaine B.P."/>
            <person name="Borodovsky M."/>
            <person name="Klenk H.-P."/>
            <person name="Fraser C.M."/>
            <person name="Smith H.O."/>
            <person name="Woese C.R."/>
            <person name="Venter J.C."/>
        </authorList>
    </citation>
    <scope>NUCLEOTIDE SEQUENCE [LARGE SCALE GENOMIC DNA]</scope>
    <source>
        <strain>ATCC 43067 / DSM 2661 / JAL-1 / JCM 10045 / NBRC 100440</strain>
    </source>
</reference>
<sequence>MVESMIDRVLLELNRTDGVKGSMVVGKDGLVIASQLPGNVDAELVGAMASAAFGAAERTSSEIGLSGLEQTMIEGEHGKTLMVDAGEGILVVLTDAKVNLGLIRITMKRAADKIKAMF</sequence>
<gene>
    <name type="ordered locus">MJ0714</name>
</gene>
<keyword id="KW-1185">Reference proteome</keyword>
<organism>
    <name type="scientific">Methanocaldococcus jannaschii (strain ATCC 43067 / DSM 2661 / JAL-1 / JCM 10045 / NBRC 100440)</name>
    <name type="common">Methanococcus jannaschii</name>
    <dbReference type="NCBI Taxonomy" id="243232"/>
    <lineage>
        <taxon>Archaea</taxon>
        <taxon>Methanobacteriati</taxon>
        <taxon>Methanobacteriota</taxon>
        <taxon>Methanomada group</taxon>
        <taxon>Methanococci</taxon>
        <taxon>Methanococcales</taxon>
        <taxon>Methanocaldococcaceae</taxon>
        <taxon>Methanocaldococcus</taxon>
    </lineage>
</organism>
<evidence type="ECO:0000305" key="1"/>
<protein>
    <recommendedName>
        <fullName>Uncharacterized protein MJ0714</fullName>
    </recommendedName>
</protein>
<feature type="chain" id="PRO_0000107000" description="Uncharacterized protein MJ0714">
    <location>
        <begin position="1"/>
        <end position="118"/>
    </location>
</feature>
<dbReference type="EMBL" id="L77117">
    <property type="protein sequence ID" value="AAB98709.1"/>
    <property type="molecule type" value="Genomic_DNA"/>
</dbReference>
<dbReference type="PIR" id="B64389">
    <property type="entry name" value="B64389"/>
</dbReference>
<dbReference type="SMR" id="Q58124"/>
<dbReference type="STRING" id="243232.MJ_0714"/>
<dbReference type="PaxDb" id="243232-MJ_0714"/>
<dbReference type="EnsemblBacteria" id="AAB98709">
    <property type="protein sequence ID" value="AAB98709"/>
    <property type="gene ID" value="MJ_0714"/>
</dbReference>
<dbReference type="KEGG" id="mja:MJ_0714"/>
<dbReference type="eggNOG" id="arCOG02603">
    <property type="taxonomic scope" value="Archaea"/>
</dbReference>
<dbReference type="HOGENOM" id="CLU_118613_4_0_2"/>
<dbReference type="InParanoid" id="Q58124"/>
<dbReference type="PhylomeDB" id="Q58124"/>
<dbReference type="Proteomes" id="UP000000805">
    <property type="component" value="Chromosome"/>
</dbReference>
<dbReference type="GO" id="GO:0005085">
    <property type="term" value="F:guanyl-nucleotide exchange factor activity"/>
    <property type="evidence" value="ECO:0007669"/>
    <property type="project" value="InterPro"/>
</dbReference>
<dbReference type="GO" id="GO:0060090">
    <property type="term" value="F:molecular adaptor activity"/>
    <property type="evidence" value="ECO:0007669"/>
    <property type="project" value="InterPro"/>
</dbReference>
<dbReference type="GO" id="GO:0071230">
    <property type="term" value="P:cellular response to amino acid stimulus"/>
    <property type="evidence" value="ECO:0000318"/>
    <property type="project" value="GO_Central"/>
</dbReference>
<dbReference type="GO" id="GO:0032008">
    <property type="term" value="P:positive regulation of TOR signaling"/>
    <property type="evidence" value="ECO:0000318"/>
    <property type="project" value="GO_Central"/>
</dbReference>
<dbReference type="Gene3D" id="3.30.450.30">
    <property type="entry name" value="Dynein light chain 2a, cytoplasmic"/>
    <property type="match status" value="1"/>
</dbReference>
<dbReference type="InterPro" id="IPR037587">
    <property type="entry name" value="LAMTOR2-like"/>
</dbReference>
<dbReference type="InterPro" id="IPR004942">
    <property type="entry name" value="Roadblock/LAMTOR2_dom"/>
</dbReference>
<dbReference type="PANTHER" id="PTHR13323">
    <property type="entry name" value="LATE ENDOSOMAL/LYSOSOMAL MP1 INTERACTING PROTEIN"/>
    <property type="match status" value="1"/>
</dbReference>
<dbReference type="Pfam" id="PF03259">
    <property type="entry name" value="Robl_LC7"/>
    <property type="match status" value="1"/>
</dbReference>
<dbReference type="SMART" id="SM00960">
    <property type="entry name" value="Robl_LC7"/>
    <property type="match status" value="1"/>
</dbReference>
<dbReference type="SUPFAM" id="SSF103196">
    <property type="entry name" value="Roadblock/LC7 domain"/>
    <property type="match status" value="1"/>
</dbReference>
<accession>Q58124</accession>